<reference key="1">
    <citation type="submission" date="2007-04" db="EMBL/GenBank/DDBJ databases">
        <title>Genome sequence of the thermophilic hydrogen-producing bacterium Caldicellulosiruptor saccharolyticus DSM 8903.</title>
        <authorList>
            <person name="Copeland A."/>
            <person name="Lucas S."/>
            <person name="Lapidus A."/>
            <person name="Barry K."/>
            <person name="Detter J.C."/>
            <person name="Glavina del Rio T."/>
            <person name="Hammon N."/>
            <person name="Israni S."/>
            <person name="Dalin E."/>
            <person name="Tice H."/>
            <person name="Pitluck S."/>
            <person name="Kiss H."/>
            <person name="Brettin T."/>
            <person name="Bruce D."/>
            <person name="Han C."/>
            <person name="Schmutz J."/>
            <person name="Larimer F."/>
            <person name="Land M."/>
            <person name="Hauser L."/>
            <person name="Kyrpides N."/>
            <person name="Lykidis A."/>
            <person name="van de Werken H.J.G."/>
            <person name="Verhaart M.R.A."/>
            <person name="VanFossen A.L."/>
            <person name="Lewis D.L."/>
            <person name="Nichols J.D."/>
            <person name="Goorissen H.P."/>
            <person name="van Niel E.W.J."/>
            <person name="Stams F.J.M."/>
            <person name="Willquist K.U."/>
            <person name="Ward D.E."/>
            <person name="van der Oost J."/>
            <person name="Kelly R.M."/>
            <person name="Kengen S.M.W."/>
            <person name="Richardson P."/>
        </authorList>
    </citation>
    <scope>NUCLEOTIDE SEQUENCE [LARGE SCALE GENOMIC DNA]</scope>
    <source>
        <strain>ATCC 43494 / DSM 8903 / Tp8T 6331</strain>
    </source>
</reference>
<feature type="chain" id="PRO_1000015311" description="Deoxyribose-phosphate aldolase">
    <location>
        <begin position="1"/>
        <end position="220"/>
    </location>
</feature>
<feature type="active site" description="Proton donor/acceptor" evidence="1">
    <location>
        <position position="92"/>
    </location>
</feature>
<feature type="active site" description="Schiff-base intermediate with acetaldehyde" evidence="1">
    <location>
        <position position="157"/>
    </location>
</feature>
<feature type="active site" description="Proton donor/acceptor" evidence="1">
    <location>
        <position position="186"/>
    </location>
</feature>
<evidence type="ECO:0000255" key="1">
    <source>
        <dbReference type="HAMAP-Rule" id="MF_00114"/>
    </source>
</evidence>
<dbReference type="EC" id="4.1.2.4" evidence="1"/>
<dbReference type="EMBL" id="CP000679">
    <property type="protein sequence ID" value="ABP67895.1"/>
    <property type="molecule type" value="Genomic_DNA"/>
</dbReference>
<dbReference type="RefSeq" id="WP_011917821.1">
    <property type="nucleotide sequence ID" value="NC_009437.1"/>
</dbReference>
<dbReference type="SMR" id="A4XLW0"/>
<dbReference type="STRING" id="351627.Csac_2317"/>
<dbReference type="KEGG" id="csc:Csac_2317"/>
<dbReference type="eggNOG" id="COG0274">
    <property type="taxonomic scope" value="Bacteria"/>
</dbReference>
<dbReference type="HOGENOM" id="CLU_053595_0_1_9"/>
<dbReference type="OrthoDB" id="9778711at2"/>
<dbReference type="UniPathway" id="UPA00002">
    <property type="reaction ID" value="UER00468"/>
</dbReference>
<dbReference type="Proteomes" id="UP000000256">
    <property type="component" value="Chromosome"/>
</dbReference>
<dbReference type="GO" id="GO:0005737">
    <property type="term" value="C:cytoplasm"/>
    <property type="evidence" value="ECO:0007669"/>
    <property type="project" value="UniProtKB-SubCell"/>
</dbReference>
<dbReference type="GO" id="GO:0004139">
    <property type="term" value="F:deoxyribose-phosphate aldolase activity"/>
    <property type="evidence" value="ECO:0007669"/>
    <property type="project" value="UniProtKB-UniRule"/>
</dbReference>
<dbReference type="GO" id="GO:0006018">
    <property type="term" value="P:2-deoxyribose 1-phosphate catabolic process"/>
    <property type="evidence" value="ECO:0007669"/>
    <property type="project" value="UniProtKB-UniRule"/>
</dbReference>
<dbReference type="GO" id="GO:0016052">
    <property type="term" value="P:carbohydrate catabolic process"/>
    <property type="evidence" value="ECO:0007669"/>
    <property type="project" value="TreeGrafter"/>
</dbReference>
<dbReference type="GO" id="GO:0009264">
    <property type="term" value="P:deoxyribonucleotide catabolic process"/>
    <property type="evidence" value="ECO:0007669"/>
    <property type="project" value="InterPro"/>
</dbReference>
<dbReference type="CDD" id="cd00959">
    <property type="entry name" value="DeoC"/>
    <property type="match status" value="1"/>
</dbReference>
<dbReference type="FunFam" id="3.20.20.70:FF:000044">
    <property type="entry name" value="Deoxyribose-phosphate aldolase"/>
    <property type="match status" value="1"/>
</dbReference>
<dbReference type="Gene3D" id="3.20.20.70">
    <property type="entry name" value="Aldolase class I"/>
    <property type="match status" value="1"/>
</dbReference>
<dbReference type="HAMAP" id="MF_00114">
    <property type="entry name" value="DeoC_type1"/>
    <property type="match status" value="1"/>
</dbReference>
<dbReference type="InterPro" id="IPR013785">
    <property type="entry name" value="Aldolase_TIM"/>
</dbReference>
<dbReference type="InterPro" id="IPR011343">
    <property type="entry name" value="DeoC"/>
</dbReference>
<dbReference type="InterPro" id="IPR002915">
    <property type="entry name" value="DeoC/FbaB/LacD_aldolase"/>
</dbReference>
<dbReference type="InterPro" id="IPR028581">
    <property type="entry name" value="DeoC_typeI"/>
</dbReference>
<dbReference type="NCBIfam" id="TIGR00126">
    <property type="entry name" value="deoC"/>
    <property type="match status" value="1"/>
</dbReference>
<dbReference type="PANTHER" id="PTHR10889">
    <property type="entry name" value="DEOXYRIBOSE-PHOSPHATE ALDOLASE"/>
    <property type="match status" value="1"/>
</dbReference>
<dbReference type="PANTHER" id="PTHR10889:SF1">
    <property type="entry name" value="DEOXYRIBOSE-PHOSPHATE ALDOLASE"/>
    <property type="match status" value="1"/>
</dbReference>
<dbReference type="Pfam" id="PF01791">
    <property type="entry name" value="DeoC"/>
    <property type="match status" value="1"/>
</dbReference>
<dbReference type="PIRSF" id="PIRSF001357">
    <property type="entry name" value="DeoC"/>
    <property type="match status" value="1"/>
</dbReference>
<dbReference type="SMART" id="SM01133">
    <property type="entry name" value="DeoC"/>
    <property type="match status" value="1"/>
</dbReference>
<dbReference type="SUPFAM" id="SSF51569">
    <property type="entry name" value="Aldolase"/>
    <property type="match status" value="1"/>
</dbReference>
<accession>A4XLW0</accession>
<sequence length="220" mass="24105">MTKKEIAKFIDHTFLKSNATHADIKKLCDEALKYSFASVCVNPYYVKVCKEYLKDSPVKVATVVGFPLGATSMKTKIFEAKEAFEDGADEIDMVINIGALLEGNVDYVYEEIKNIVDIARGYKNKIVKVIIETSELSDQQKIEACKIVMDAGADFVKTSTGFSKSGAKYEDILLMRKVVGDKIKIKASGGIRTYEDALEMIEAGASRIGTSSGVAIVSED</sequence>
<protein>
    <recommendedName>
        <fullName evidence="1">Deoxyribose-phosphate aldolase</fullName>
        <shortName evidence="1">DERA</shortName>
        <ecNumber evidence="1">4.1.2.4</ecNumber>
    </recommendedName>
    <alternativeName>
        <fullName evidence="1">2-deoxy-D-ribose 5-phosphate aldolase</fullName>
    </alternativeName>
    <alternativeName>
        <fullName evidence="1">Phosphodeoxyriboaldolase</fullName>
        <shortName evidence="1">Deoxyriboaldolase</shortName>
    </alternativeName>
</protein>
<organism>
    <name type="scientific">Caldicellulosiruptor saccharolyticus (strain ATCC 43494 / DSM 8903 / Tp8T 6331)</name>
    <dbReference type="NCBI Taxonomy" id="351627"/>
    <lineage>
        <taxon>Bacteria</taxon>
        <taxon>Bacillati</taxon>
        <taxon>Bacillota</taxon>
        <taxon>Bacillota incertae sedis</taxon>
        <taxon>Caldicellulosiruptorales</taxon>
        <taxon>Caldicellulosiruptoraceae</taxon>
        <taxon>Caldicellulosiruptor</taxon>
    </lineage>
</organism>
<comment type="function">
    <text evidence="1">Catalyzes a reversible aldol reaction between acetaldehyde and D-glyceraldehyde 3-phosphate to generate 2-deoxy-D-ribose 5-phosphate.</text>
</comment>
<comment type="catalytic activity">
    <reaction evidence="1">
        <text>2-deoxy-D-ribose 5-phosphate = D-glyceraldehyde 3-phosphate + acetaldehyde</text>
        <dbReference type="Rhea" id="RHEA:12821"/>
        <dbReference type="ChEBI" id="CHEBI:15343"/>
        <dbReference type="ChEBI" id="CHEBI:59776"/>
        <dbReference type="ChEBI" id="CHEBI:62877"/>
        <dbReference type="EC" id="4.1.2.4"/>
    </reaction>
</comment>
<comment type="pathway">
    <text evidence="1">Carbohydrate degradation; 2-deoxy-D-ribose 1-phosphate degradation; D-glyceraldehyde 3-phosphate and acetaldehyde from 2-deoxy-alpha-D-ribose 1-phosphate: step 2/2.</text>
</comment>
<comment type="subcellular location">
    <subcellularLocation>
        <location evidence="1">Cytoplasm</location>
    </subcellularLocation>
</comment>
<comment type="similarity">
    <text evidence="1">Belongs to the DeoC/FbaB aldolase family. DeoC type 1 subfamily.</text>
</comment>
<gene>
    <name evidence="1" type="primary">deoC</name>
    <name type="ordered locus">Csac_2317</name>
</gene>
<name>DEOC_CALS8</name>
<proteinExistence type="inferred from homology"/>
<keyword id="KW-0963">Cytoplasm</keyword>
<keyword id="KW-0456">Lyase</keyword>
<keyword id="KW-0704">Schiff base</keyword>